<evidence type="ECO:0000250" key="1"/>
<evidence type="ECO:0000255" key="2">
    <source>
        <dbReference type="HAMAP-Rule" id="MF_00492"/>
    </source>
</evidence>
<protein>
    <recommendedName>
        <fullName evidence="2">Transaldolase</fullName>
        <ecNumber evidence="2">2.2.1.2</ecNumber>
    </recommendedName>
</protein>
<sequence length="339" mass="37379">MSSLLEQLSSMTIVVADTGDLEAIRTFKPRDATTNPSLILAAAQVPGYQKLIDEALKSSREEIGIRGSFQEVVKEALDQICVVFGKEILKNIPGRVSTEVDARLSFDTQATVEKARKLIRLYNKAGIKNDRVLIKIASTWEGIKAAEVLEREGIHCNLTLLFNFCQAAACAEAGVTLISPFVGRILDWYKANTGIANYPGPEDPGVISVTKIFNYFKSNNYKTEVMGASFRNIEEIVELAGCDLLTISPKLLDQLSNTNVPLEKKLDSLNPKPVGQKIDIDHEKFESMMNSDSMAFEKLDEGIKKFSKAIDDLEIRLLERIAILEEGKSFALSGNAISS</sequence>
<gene>
    <name evidence="2" type="primary">tal</name>
    <name type="ordered locus">P9211_05211</name>
</gene>
<organism>
    <name type="scientific">Prochlorococcus marinus (strain MIT 9211)</name>
    <dbReference type="NCBI Taxonomy" id="93059"/>
    <lineage>
        <taxon>Bacteria</taxon>
        <taxon>Bacillati</taxon>
        <taxon>Cyanobacteriota</taxon>
        <taxon>Cyanophyceae</taxon>
        <taxon>Synechococcales</taxon>
        <taxon>Prochlorococcaceae</taxon>
        <taxon>Prochlorococcus</taxon>
    </lineage>
</organism>
<keyword id="KW-0963">Cytoplasm</keyword>
<keyword id="KW-0570">Pentose shunt</keyword>
<keyword id="KW-1185">Reference proteome</keyword>
<keyword id="KW-0704">Schiff base</keyword>
<keyword id="KW-0808">Transferase</keyword>
<dbReference type="EC" id="2.2.1.2" evidence="2"/>
<dbReference type="EMBL" id="CP000878">
    <property type="protein sequence ID" value="ABX08452.1"/>
    <property type="molecule type" value="Genomic_DNA"/>
</dbReference>
<dbReference type="RefSeq" id="WP_012195075.1">
    <property type="nucleotide sequence ID" value="NC_009976.1"/>
</dbReference>
<dbReference type="SMR" id="A9BEE2"/>
<dbReference type="STRING" id="93059.P9211_05211"/>
<dbReference type="KEGG" id="pmj:P9211_05211"/>
<dbReference type="eggNOG" id="COG0176">
    <property type="taxonomic scope" value="Bacteria"/>
</dbReference>
<dbReference type="HOGENOM" id="CLU_047470_0_1_3"/>
<dbReference type="OrthoDB" id="9807051at2"/>
<dbReference type="UniPathway" id="UPA00115">
    <property type="reaction ID" value="UER00414"/>
</dbReference>
<dbReference type="Proteomes" id="UP000000788">
    <property type="component" value="Chromosome"/>
</dbReference>
<dbReference type="GO" id="GO:0005737">
    <property type="term" value="C:cytoplasm"/>
    <property type="evidence" value="ECO:0007669"/>
    <property type="project" value="UniProtKB-SubCell"/>
</dbReference>
<dbReference type="GO" id="GO:0004801">
    <property type="term" value="F:transaldolase activity"/>
    <property type="evidence" value="ECO:0000250"/>
    <property type="project" value="UniProtKB"/>
</dbReference>
<dbReference type="GO" id="GO:0005975">
    <property type="term" value="P:carbohydrate metabolic process"/>
    <property type="evidence" value="ECO:0007669"/>
    <property type="project" value="InterPro"/>
</dbReference>
<dbReference type="GO" id="GO:0006098">
    <property type="term" value="P:pentose-phosphate shunt"/>
    <property type="evidence" value="ECO:0007669"/>
    <property type="project" value="UniProtKB-UniRule"/>
</dbReference>
<dbReference type="CDD" id="cd00957">
    <property type="entry name" value="Transaldolase_TalAB"/>
    <property type="match status" value="1"/>
</dbReference>
<dbReference type="FunFam" id="3.20.20.70:FF:000002">
    <property type="entry name" value="Transaldolase"/>
    <property type="match status" value="1"/>
</dbReference>
<dbReference type="Gene3D" id="3.20.20.70">
    <property type="entry name" value="Aldolase class I"/>
    <property type="match status" value="1"/>
</dbReference>
<dbReference type="HAMAP" id="MF_00492">
    <property type="entry name" value="Transaldolase_1"/>
    <property type="match status" value="1"/>
</dbReference>
<dbReference type="InterPro" id="IPR013785">
    <property type="entry name" value="Aldolase_TIM"/>
</dbReference>
<dbReference type="InterPro" id="IPR001585">
    <property type="entry name" value="TAL/FSA"/>
</dbReference>
<dbReference type="InterPro" id="IPR004730">
    <property type="entry name" value="Transaldolase_1"/>
</dbReference>
<dbReference type="InterPro" id="IPR018225">
    <property type="entry name" value="Transaldolase_AS"/>
</dbReference>
<dbReference type="NCBIfam" id="NF008965">
    <property type="entry name" value="PRK12309.1"/>
    <property type="match status" value="1"/>
</dbReference>
<dbReference type="NCBIfam" id="TIGR00874">
    <property type="entry name" value="talAB"/>
    <property type="match status" value="1"/>
</dbReference>
<dbReference type="PANTHER" id="PTHR10683">
    <property type="entry name" value="TRANSALDOLASE"/>
    <property type="match status" value="1"/>
</dbReference>
<dbReference type="PANTHER" id="PTHR10683:SF18">
    <property type="entry name" value="TRANSALDOLASE"/>
    <property type="match status" value="1"/>
</dbReference>
<dbReference type="Pfam" id="PF00923">
    <property type="entry name" value="TAL_FSA"/>
    <property type="match status" value="1"/>
</dbReference>
<dbReference type="SUPFAM" id="SSF51569">
    <property type="entry name" value="Aldolase"/>
    <property type="match status" value="1"/>
</dbReference>
<dbReference type="PROSITE" id="PS01054">
    <property type="entry name" value="TRANSALDOLASE_1"/>
    <property type="match status" value="1"/>
</dbReference>
<dbReference type="PROSITE" id="PS00958">
    <property type="entry name" value="TRANSALDOLASE_2"/>
    <property type="match status" value="1"/>
</dbReference>
<reference key="1">
    <citation type="journal article" date="2007" name="PLoS Genet.">
        <title>Patterns and implications of gene gain and loss in the evolution of Prochlorococcus.</title>
        <authorList>
            <person name="Kettler G.C."/>
            <person name="Martiny A.C."/>
            <person name="Huang K."/>
            <person name="Zucker J."/>
            <person name="Coleman M.L."/>
            <person name="Rodrigue S."/>
            <person name="Chen F."/>
            <person name="Lapidus A."/>
            <person name="Ferriera S."/>
            <person name="Johnson J."/>
            <person name="Steglich C."/>
            <person name="Church G.M."/>
            <person name="Richardson P."/>
            <person name="Chisholm S.W."/>
        </authorList>
    </citation>
    <scope>NUCLEOTIDE SEQUENCE [LARGE SCALE GENOMIC DNA]</scope>
    <source>
        <strain>MIT 9211</strain>
    </source>
</reference>
<proteinExistence type="inferred from homology"/>
<accession>A9BEE2</accession>
<comment type="function">
    <text evidence="2">Transaldolase is important for the balance of metabolites in the pentose-phosphate pathway.</text>
</comment>
<comment type="catalytic activity">
    <reaction evidence="2">
        <text>D-sedoheptulose 7-phosphate + D-glyceraldehyde 3-phosphate = D-erythrose 4-phosphate + beta-D-fructose 6-phosphate</text>
        <dbReference type="Rhea" id="RHEA:17053"/>
        <dbReference type="ChEBI" id="CHEBI:16897"/>
        <dbReference type="ChEBI" id="CHEBI:57483"/>
        <dbReference type="ChEBI" id="CHEBI:57634"/>
        <dbReference type="ChEBI" id="CHEBI:59776"/>
        <dbReference type="EC" id="2.2.1.2"/>
    </reaction>
</comment>
<comment type="pathway">
    <text evidence="2">Carbohydrate degradation; pentose phosphate pathway; D-glyceraldehyde 3-phosphate and beta-D-fructose 6-phosphate from D-ribose 5-phosphate and D-xylulose 5-phosphate (non-oxidative stage): step 2/3.</text>
</comment>
<comment type="subunit">
    <text evidence="1">Homodimer.</text>
</comment>
<comment type="subcellular location">
    <subcellularLocation>
        <location evidence="2">Cytoplasm</location>
    </subcellularLocation>
</comment>
<comment type="similarity">
    <text evidence="2">Belongs to the transaldolase family. Type 1 subfamily.</text>
</comment>
<name>TAL_PROM4</name>
<feature type="chain" id="PRO_1000126249" description="Transaldolase">
    <location>
        <begin position="1"/>
        <end position="339"/>
    </location>
</feature>
<feature type="active site" description="Schiff-base intermediate with substrate" evidence="2">
    <location>
        <position position="135"/>
    </location>
</feature>